<reference key="1">
    <citation type="journal article" date="2005" name="Nat. Biotechnol.">
        <title>Complete genome sequence of the acetic acid bacterium Gluconobacter oxydans.</title>
        <authorList>
            <person name="Prust C."/>
            <person name="Hoffmeister M."/>
            <person name="Liesegang H."/>
            <person name="Wiezer A."/>
            <person name="Fricke W.F."/>
            <person name="Ehrenreich A."/>
            <person name="Gottschalk G."/>
            <person name="Deppenmeier U."/>
        </authorList>
    </citation>
    <scope>NUCLEOTIDE SEQUENCE [LARGE SCALE GENOMIC DNA]</scope>
    <source>
        <strain>621H</strain>
    </source>
</reference>
<comment type="function">
    <text evidence="1">Plays an important role in the de novo pathway of purine nucleotide biosynthesis. Catalyzes the first committed step in the biosynthesis of AMP from IMP.</text>
</comment>
<comment type="catalytic activity">
    <reaction evidence="1">
        <text>IMP + L-aspartate + GTP = N(6)-(1,2-dicarboxyethyl)-AMP + GDP + phosphate + 2 H(+)</text>
        <dbReference type="Rhea" id="RHEA:15753"/>
        <dbReference type="ChEBI" id="CHEBI:15378"/>
        <dbReference type="ChEBI" id="CHEBI:29991"/>
        <dbReference type="ChEBI" id="CHEBI:37565"/>
        <dbReference type="ChEBI" id="CHEBI:43474"/>
        <dbReference type="ChEBI" id="CHEBI:57567"/>
        <dbReference type="ChEBI" id="CHEBI:58053"/>
        <dbReference type="ChEBI" id="CHEBI:58189"/>
        <dbReference type="EC" id="6.3.4.4"/>
    </reaction>
</comment>
<comment type="cofactor">
    <cofactor evidence="1">
        <name>Mg(2+)</name>
        <dbReference type="ChEBI" id="CHEBI:18420"/>
    </cofactor>
    <text evidence="1">Binds 1 Mg(2+) ion per subunit.</text>
</comment>
<comment type="pathway">
    <text evidence="1">Purine metabolism; AMP biosynthesis via de novo pathway; AMP from IMP: step 1/2.</text>
</comment>
<comment type="subunit">
    <text evidence="1">Homodimer.</text>
</comment>
<comment type="subcellular location">
    <subcellularLocation>
        <location evidence="1">Cytoplasm</location>
    </subcellularLocation>
</comment>
<comment type="similarity">
    <text evidence="1">Belongs to the adenylosuccinate synthetase family.</text>
</comment>
<name>PURA_GLUOX</name>
<accession>Q5FQZ9</accession>
<keyword id="KW-0963">Cytoplasm</keyword>
<keyword id="KW-0342">GTP-binding</keyword>
<keyword id="KW-0436">Ligase</keyword>
<keyword id="KW-0460">Magnesium</keyword>
<keyword id="KW-0479">Metal-binding</keyword>
<keyword id="KW-0547">Nucleotide-binding</keyword>
<keyword id="KW-0658">Purine biosynthesis</keyword>
<keyword id="KW-1185">Reference proteome</keyword>
<proteinExistence type="inferred from homology"/>
<evidence type="ECO:0000255" key="1">
    <source>
        <dbReference type="HAMAP-Rule" id="MF_00011"/>
    </source>
</evidence>
<dbReference type="EC" id="6.3.4.4" evidence="1"/>
<dbReference type="EMBL" id="CP000009">
    <property type="protein sequence ID" value="AAW61197.1"/>
    <property type="molecule type" value="Genomic_DNA"/>
</dbReference>
<dbReference type="RefSeq" id="WP_011252984.1">
    <property type="nucleotide sequence ID" value="NC_006677.1"/>
</dbReference>
<dbReference type="SMR" id="Q5FQZ9"/>
<dbReference type="STRING" id="290633.GOX1448"/>
<dbReference type="KEGG" id="gox:GOX1448"/>
<dbReference type="eggNOG" id="COG0104">
    <property type="taxonomic scope" value="Bacteria"/>
</dbReference>
<dbReference type="HOGENOM" id="CLU_029848_0_0_5"/>
<dbReference type="UniPathway" id="UPA00075">
    <property type="reaction ID" value="UER00335"/>
</dbReference>
<dbReference type="Proteomes" id="UP000006375">
    <property type="component" value="Chromosome"/>
</dbReference>
<dbReference type="GO" id="GO:0005737">
    <property type="term" value="C:cytoplasm"/>
    <property type="evidence" value="ECO:0007669"/>
    <property type="project" value="UniProtKB-SubCell"/>
</dbReference>
<dbReference type="GO" id="GO:0004019">
    <property type="term" value="F:adenylosuccinate synthase activity"/>
    <property type="evidence" value="ECO:0007669"/>
    <property type="project" value="UniProtKB-UniRule"/>
</dbReference>
<dbReference type="GO" id="GO:0005525">
    <property type="term" value="F:GTP binding"/>
    <property type="evidence" value="ECO:0007669"/>
    <property type="project" value="UniProtKB-UniRule"/>
</dbReference>
<dbReference type="GO" id="GO:0000287">
    <property type="term" value="F:magnesium ion binding"/>
    <property type="evidence" value="ECO:0007669"/>
    <property type="project" value="UniProtKB-UniRule"/>
</dbReference>
<dbReference type="GO" id="GO:0044208">
    <property type="term" value="P:'de novo' AMP biosynthetic process"/>
    <property type="evidence" value="ECO:0007669"/>
    <property type="project" value="UniProtKB-UniRule"/>
</dbReference>
<dbReference type="GO" id="GO:0046040">
    <property type="term" value="P:IMP metabolic process"/>
    <property type="evidence" value="ECO:0007669"/>
    <property type="project" value="TreeGrafter"/>
</dbReference>
<dbReference type="CDD" id="cd03108">
    <property type="entry name" value="AdSS"/>
    <property type="match status" value="1"/>
</dbReference>
<dbReference type="FunFam" id="1.10.300.10:FF:000001">
    <property type="entry name" value="Adenylosuccinate synthetase"/>
    <property type="match status" value="1"/>
</dbReference>
<dbReference type="FunFam" id="3.90.170.10:FF:000001">
    <property type="entry name" value="Adenylosuccinate synthetase"/>
    <property type="match status" value="1"/>
</dbReference>
<dbReference type="Gene3D" id="3.40.440.10">
    <property type="entry name" value="Adenylosuccinate Synthetase, subunit A, domain 1"/>
    <property type="match status" value="1"/>
</dbReference>
<dbReference type="Gene3D" id="1.10.300.10">
    <property type="entry name" value="Adenylosuccinate Synthetase, subunit A, domain 2"/>
    <property type="match status" value="1"/>
</dbReference>
<dbReference type="Gene3D" id="3.90.170.10">
    <property type="entry name" value="Adenylosuccinate Synthetase, subunit A, domain 3"/>
    <property type="match status" value="1"/>
</dbReference>
<dbReference type="HAMAP" id="MF_00011">
    <property type="entry name" value="Adenylosucc_synth"/>
    <property type="match status" value="1"/>
</dbReference>
<dbReference type="InterPro" id="IPR018220">
    <property type="entry name" value="Adenylosuccin_syn_GTP-bd"/>
</dbReference>
<dbReference type="InterPro" id="IPR033128">
    <property type="entry name" value="Adenylosuccin_syn_Lys_AS"/>
</dbReference>
<dbReference type="InterPro" id="IPR042109">
    <property type="entry name" value="Adenylosuccinate_synth_dom1"/>
</dbReference>
<dbReference type="InterPro" id="IPR042110">
    <property type="entry name" value="Adenylosuccinate_synth_dom2"/>
</dbReference>
<dbReference type="InterPro" id="IPR042111">
    <property type="entry name" value="Adenylosuccinate_synth_dom3"/>
</dbReference>
<dbReference type="InterPro" id="IPR001114">
    <property type="entry name" value="Adenylosuccinate_synthetase"/>
</dbReference>
<dbReference type="InterPro" id="IPR027417">
    <property type="entry name" value="P-loop_NTPase"/>
</dbReference>
<dbReference type="NCBIfam" id="NF002223">
    <property type="entry name" value="PRK01117.1"/>
    <property type="match status" value="1"/>
</dbReference>
<dbReference type="NCBIfam" id="TIGR00184">
    <property type="entry name" value="purA"/>
    <property type="match status" value="1"/>
</dbReference>
<dbReference type="PANTHER" id="PTHR11846">
    <property type="entry name" value="ADENYLOSUCCINATE SYNTHETASE"/>
    <property type="match status" value="1"/>
</dbReference>
<dbReference type="PANTHER" id="PTHR11846:SF0">
    <property type="entry name" value="ADENYLOSUCCINATE SYNTHETASE"/>
    <property type="match status" value="1"/>
</dbReference>
<dbReference type="Pfam" id="PF00709">
    <property type="entry name" value="Adenylsucc_synt"/>
    <property type="match status" value="1"/>
</dbReference>
<dbReference type="SMART" id="SM00788">
    <property type="entry name" value="Adenylsucc_synt"/>
    <property type="match status" value="1"/>
</dbReference>
<dbReference type="SUPFAM" id="SSF52540">
    <property type="entry name" value="P-loop containing nucleoside triphosphate hydrolases"/>
    <property type="match status" value="1"/>
</dbReference>
<dbReference type="PROSITE" id="PS01266">
    <property type="entry name" value="ADENYLOSUCCIN_SYN_1"/>
    <property type="match status" value="1"/>
</dbReference>
<dbReference type="PROSITE" id="PS00513">
    <property type="entry name" value="ADENYLOSUCCIN_SYN_2"/>
    <property type="match status" value="1"/>
</dbReference>
<gene>
    <name evidence="1" type="primary">purA</name>
    <name type="ordered locus">GOX1448</name>
</gene>
<organism>
    <name type="scientific">Gluconobacter oxydans (strain 621H)</name>
    <name type="common">Gluconobacter suboxydans</name>
    <dbReference type="NCBI Taxonomy" id="290633"/>
    <lineage>
        <taxon>Bacteria</taxon>
        <taxon>Pseudomonadati</taxon>
        <taxon>Pseudomonadota</taxon>
        <taxon>Alphaproteobacteria</taxon>
        <taxon>Acetobacterales</taxon>
        <taxon>Acetobacteraceae</taxon>
        <taxon>Gluconobacter</taxon>
    </lineage>
</organism>
<sequence>MSNVTVIGTQWGDEGKGKIVDWLASRADIVVRFQGGHNAGHTLVVGDQIYKLSLLPSGLVRGKIGVIGNGVVVDPKALMTEIDRVTAQGLVVTPETLWIAENAPLILPVHGALDRAREAARGDHKIGTTGRGIGPAYEDKVARRAIRICDLAEPETLDWKLDELLLHHNTLLAGLGAETFTKEQLKDFLAEITPRLLPFSCQVWDRLDEARRAGRRILFEGAQAVMLDVDHGTYPFVTSSNTVAAVAASGSGVSPSSVGFVLGIAKAYTTRVGEGPFPTELHDQTGRTLGERGHEFGTVTGRPRRCGWFDAVLIRRAVRVGGVSGIALTKLDVLDGLDEISICVGYELDGQKIETFPSAPGAQTRVKPVYETMPGWKETTAGARSWAELPAQAIKYVRRIEELIEAPVTLLSTSPERDDTILMRDPFED</sequence>
<feature type="chain" id="PRO_0000224284" description="Adenylosuccinate synthetase">
    <location>
        <begin position="1"/>
        <end position="429"/>
    </location>
</feature>
<feature type="active site" description="Proton acceptor" evidence="1">
    <location>
        <position position="13"/>
    </location>
</feature>
<feature type="active site" description="Proton donor" evidence="1">
    <location>
        <position position="41"/>
    </location>
</feature>
<feature type="binding site" evidence="1">
    <location>
        <begin position="12"/>
        <end position="18"/>
    </location>
    <ligand>
        <name>GTP</name>
        <dbReference type="ChEBI" id="CHEBI:37565"/>
    </ligand>
</feature>
<feature type="binding site" description="in other chain" evidence="1">
    <location>
        <begin position="13"/>
        <end position="16"/>
    </location>
    <ligand>
        <name>IMP</name>
        <dbReference type="ChEBI" id="CHEBI:58053"/>
        <note>ligand shared between dimeric partners</note>
    </ligand>
</feature>
<feature type="binding site" evidence="1">
    <location>
        <position position="13"/>
    </location>
    <ligand>
        <name>Mg(2+)</name>
        <dbReference type="ChEBI" id="CHEBI:18420"/>
    </ligand>
</feature>
<feature type="binding site" description="in other chain" evidence="1">
    <location>
        <begin position="38"/>
        <end position="41"/>
    </location>
    <ligand>
        <name>IMP</name>
        <dbReference type="ChEBI" id="CHEBI:58053"/>
        <note>ligand shared between dimeric partners</note>
    </ligand>
</feature>
<feature type="binding site" evidence="1">
    <location>
        <begin position="40"/>
        <end position="42"/>
    </location>
    <ligand>
        <name>GTP</name>
        <dbReference type="ChEBI" id="CHEBI:37565"/>
    </ligand>
</feature>
<feature type="binding site" evidence="1">
    <location>
        <position position="40"/>
    </location>
    <ligand>
        <name>Mg(2+)</name>
        <dbReference type="ChEBI" id="CHEBI:18420"/>
    </ligand>
</feature>
<feature type="binding site" description="in other chain" evidence="1">
    <location>
        <position position="129"/>
    </location>
    <ligand>
        <name>IMP</name>
        <dbReference type="ChEBI" id="CHEBI:58053"/>
        <note>ligand shared between dimeric partners</note>
    </ligand>
</feature>
<feature type="binding site" evidence="1">
    <location>
        <position position="143"/>
    </location>
    <ligand>
        <name>IMP</name>
        <dbReference type="ChEBI" id="CHEBI:58053"/>
        <note>ligand shared between dimeric partners</note>
    </ligand>
</feature>
<feature type="binding site" description="in other chain" evidence="1">
    <location>
        <position position="223"/>
    </location>
    <ligand>
        <name>IMP</name>
        <dbReference type="ChEBI" id="CHEBI:58053"/>
        <note>ligand shared between dimeric partners</note>
    </ligand>
</feature>
<feature type="binding site" description="in other chain" evidence="1">
    <location>
        <position position="238"/>
    </location>
    <ligand>
        <name>IMP</name>
        <dbReference type="ChEBI" id="CHEBI:58053"/>
        <note>ligand shared between dimeric partners</note>
    </ligand>
</feature>
<feature type="binding site" evidence="1">
    <location>
        <begin position="298"/>
        <end position="304"/>
    </location>
    <ligand>
        <name>substrate</name>
    </ligand>
</feature>
<feature type="binding site" description="in other chain" evidence="1">
    <location>
        <position position="302"/>
    </location>
    <ligand>
        <name>IMP</name>
        <dbReference type="ChEBI" id="CHEBI:58053"/>
        <note>ligand shared between dimeric partners</note>
    </ligand>
</feature>
<feature type="binding site" evidence="1">
    <location>
        <position position="304"/>
    </location>
    <ligand>
        <name>GTP</name>
        <dbReference type="ChEBI" id="CHEBI:37565"/>
    </ligand>
</feature>
<feature type="binding site" evidence="1">
    <location>
        <begin position="330"/>
        <end position="332"/>
    </location>
    <ligand>
        <name>GTP</name>
        <dbReference type="ChEBI" id="CHEBI:37565"/>
    </ligand>
</feature>
<feature type="binding site" evidence="1">
    <location>
        <begin position="412"/>
        <end position="414"/>
    </location>
    <ligand>
        <name>GTP</name>
        <dbReference type="ChEBI" id="CHEBI:37565"/>
    </ligand>
</feature>
<protein>
    <recommendedName>
        <fullName evidence="1">Adenylosuccinate synthetase</fullName>
        <shortName evidence="1">AMPSase</shortName>
        <shortName evidence="1">AdSS</shortName>
        <ecNumber evidence="1">6.3.4.4</ecNumber>
    </recommendedName>
    <alternativeName>
        <fullName evidence="1">IMP--aspartate ligase</fullName>
    </alternativeName>
</protein>